<evidence type="ECO:0000255" key="1">
    <source>
        <dbReference type="HAMAP-Rule" id="MF_00249"/>
    </source>
</evidence>
<reference key="1">
    <citation type="journal article" date="2006" name="PLoS Biol.">
        <title>Metabolic complementarity and genomics of the dual bacterial symbiosis of sharpshooters.</title>
        <authorList>
            <person name="Wu D."/>
            <person name="Daugherty S.C."/>
            <person name="Van Aken S.E."/>
            <person name="Pai G.H."/>
            <person name="Watkins K.L."/>
            <person name="Khouri H."/>
            <person name="Tallon L.J."/>
            <person name="Zaborsky J.M."/>
            <person name="Dunbar H.E."/>
            <person name="Tran P.L."/>
            <person name="Moran N.A."/>
            <person name="Eisen J.A."/>
        </authorList>
    </citation>
    <scope>NUCLEOTIDE SEQUENCE [LARGE SCALE GENOMIC DNA]</scope>
</reference>
<keyword id="KW-0067">ATP-binding</keyword>
<keyword id="KW-0143">Chaperone</keyword>
<keyword id="KW-0963">Cytoplasm</keyword>
<keyword id="KW-0547">Nucleotide-binding</keyword>
<keyword id="KW-1185">Reference proteome</keyword>
<keyword id="KW-0346">Stress response</keyword>
<dbReference type="EMBL" id="CP000238">
    <property type="protein sequence ID" value="ABF14221.1"/>
    <property type="molecule type" value="Genomic_DNA"/>
</dbReference>
<dbReference type="RefSeq" id="WP_011520362.1">
    <property type="nucleotide sequence ID" value="NC_007984.1"/>
</dbReference>
<dbReference type="SMR" id="Q1LTT5"/>
<dbReference type="STRING" id="374463.BCI_0168"/>
<dbReference type="KEGG" id="bci:BCI_0168"/>
<dbReference type="HOGENOM" id="CLU_033123_0_0_6"/>
<dbReference type="OrthoDB" id="9804062at2"/>
<dbReference type="Proteomes" id="UP000002427">
    <property type="component" value="Chromosome"/>
</dbReference>
<dbReference type="GO" id="GO:0009376">
    <property type="term" value="C:HslUV protease complex"/>
    <property type="evidence" value="ECO:0007669"/>
    <property type="project" value="UniProtKB-UniRule"/>
</dbReference>
<dbReference type="GO" id="GO:0005524">
    <property type="term" value="F:ATP binding"/>
    <property type="evidence" value="ECO:0007669"/>
    <property type="project" value="UniProtKB-UniRule"/>
</dbReference>
<dbReference type="GO" id="GO:0016887">
    <property type="term" value="F:ATP hydrolysis activity"/>
    <property type="evidence" value="ECO:0007669"/>
    <property type="project" value="InterPro"/>
</dbReference>
<dbReference type="GO" id="GO:0008233">
    <property type="term" value="F:peptidase activity"/>
    <property type="evidence" value="ECO:0007669"/>
    <property type="project" value="InterPro"/>
</dbReference>
<dbReference type="GO" id="GO:0036402">
    <property type="term" value="F:proteasome-activating activity"/>
    <property type="evidence" value="ECO:0007669"/>
    <property type="project" value="UniProtKB-UniRule"/>
</dbReference>
<dbReference type="GO" id="GO:0043335">
    <property type="term" value="P:protein unfolding"/>
    <property type="evidence" value="ECO:0007669"/>
    <property type="project" value="UniProtKB-UniRule"/>
</dbReference>
<dbReference type="GO" id="GO:0051603">
    <property type="term" value="P:proteolysis involved in protein catabolic process"/>
    <property type="evidence" value="ECO:0007669"/>
    <property type="project" value="TreeGrafter"/>
</dbReference>
<dbReference type="CDD" id="cd19498">
    <property type="entry name" value="RecA-like_HslU"/>
    <property type="match status" value="1"/>
</dbReference>
<dbReference type="FunFam" id="1.10.8.10:FF:000028">
    <property type="entry name" value="ATP-dependent protease ATPase subunit HslU"/>
    <property type="match status" value="1"/>
</dbReference>
<dbReference type="FunFam" id="1.10.8.60:FF:000027">
    <property type="entry name" value="ATP-dependent protease ATPase subunit HslU"/>
    <property type="match status" value="1"/>
</dbReference>
<dbReference type="FunFam" id="3.40.50.300:FF:000213">
    <property type="entry name" value="ATP-dependent protease ATPase subunit HslU"/>
    <property type="match status" value="1"/>
</dbReference>
<dbReference type="FunFam" id="3.40.50.300:FF:000220">
    <property type="entry name" value="ATP-dependent protease ATPase subunit HslU"/>
    <property type="match status" value="1"/>
</dbReference>
<dbReference type="Gene3D" id="1.10.8.60">
    <property type="match status" value="1"/>
</dbReference>
<dbReference type="Gene3D" id="1.10.8.10">
    <property type="entry name" value="DNA helicase RuvA subunit, C-terminal domain"/>
    <property type="match status" value="1"/>
</dbReference>
<dbReference type="Gene3D" id="3.40.50.300">
    <property type="entry name" value="P-loop containing nucleotide triphosphate hydrolases"/>
    <property type="match status" value="2"/>
</dbReference>
<dbReference type="HAMAP" id="MF_00249">
    <property type="entry name" value="HslU"/>
    <property type="match status" value="1"/>
</dbReference>
<dbReference type="InterPro" id="IPR003593">
    <property type="entry name" value="AAA+_ATPase"/>
</dbReference>
<dbReference type="InterPro" id="IPR050052">
    <property type="entry name" value="ATP-dep_Clp_protease_ClpX"/>
</dbReference>
<dbReference type="InterPro" id="IPR003959">
    <property type="entry name" value="ATPase_AAA_core"/>
</dbReference>
<dbReference type="InterPro" id="IPR019489">
    <property type="entry name" value="Clp_ATPase_C"/>
</dbReference>
<dbReference type="InterPro" id="IPR004491">
    <property type="entry name" value="HslU"/>
</dbReference>
<dbReference type="InterPro" id="IPR027417">
    <property type="entry name" value="P-loop_NTPase"/>
</dbReference>
<dbReference type="NCBIfam" id="TIGR00390">
    <property type="entry name" value="hslU"/>
    <property type="match status" value="1"/>
</dbReference>
<dbReference type="NCBIfam" id="NF003544">
    <property type="entry name" value="PRK05201.1"/>
    <property type="match status" value="1"/>
</dbReference>
<dbReference type="PANTHER" id="PTHR48102">
    <property type="entry name" value="ATP-DEPENDENT CLP PROTEASE ATP-BINDING SUBUNIT CLPX-LIKE, MITOCHONDRIAL-RELATED"/>
    <property type="match status" value="1"/>
</dbReference>
<dbReference type="PANTHER" id="PTHR48102:SF3">
    <property type="entry name" value="ATP-DEPENDENT PROTEASE ATPASE SUBUNIT HSLU"/>
    <property type="match status" value="1"/>
</dbReference>
<dbReference type="Pfam" id="PF00004">
    <property type="entry name" value="AAA"/>
    <property type="match status" value="1"/>
</dbReference>
<dbReference type="Pfam" id="PF07724">
    <property type="entry name" value="AAA_2"/>
    <property type="match status" value="1"/>
</dbReference>
<dbReference type="SMART" id="SM00382">
    <property type="entry name" value="AAA"/>
    <property type="match status" value="1"/>
</dbReference>
<dbReference type="SMART" id="SM01086">
    <property type="entry name" value="ClpB_D2-small"/>
    <property type="match status" value="1"/>
</dbReference>
<dbReference type="SUPFAM" id="SSF52540">
    <property type="entry name" value="P-loop containing nucleoside triphosphate hydrolases"/>
    <property type="match status" value="1"/>
</dbReference>
<name>HSLU_BAUCH</name>
<gene>
    <name evidence="1" type="primary">hslU</name>
    <name type="ordered locus">BCI_0168</name>
</gene>
<organism>
    <name type="scientific">Baumannia cicadellinicola subsp. Homalodisca coagulata</name>
    <dbReference type="NCBI Taxonomy" id="374463"/>
    <lineage>
        <taxon>Bacteria</taxon>
        <taxon>Pseudomonadati</taxon>
        <taxon>Pseudomonadota</taxon>
        <taxon>Gammaproteobacteria</taxon>
        <taxon>Candidatus Palibaumannia</taxon>
    </lineage>
</organism>
<accession>Q1LTT5</accession>
<sequence>MSHMTPSEIVNELDDYIIGQHNAKRAVAIALRNRWRRMQLDETLRHEVTPKNILMIGPTGVGKTEIARRLAKLANAPFIKVEATKFTEVGYVGKEVDSIIRDLTDAAVKMVRLQSMEKNRFRAEERAEERILDVLIPQPTPNNWDKIEENNSSEPSSTRQHFRKKLREGQLNEKEIEINLAATPIGVEIMAPPGMEEMTNQLQSMFKNLAGQKQKSRKMKIKEAMKLLIEEEAAKLVNQEKIKEKAIEAVEQNGIVFIDEIDKICKRGDVSGPDVSSEGVQRDLLPLVEGCTVSTKHGMVKTDYILFIASGAFQVASPSDLIPELQGRLPIRVELEALTPKDFQLILTEPNASLTMQYIALMATEGVSISFTEDGIKRIAETAWQVNERTENIGARRLHTILELLMEDISYDASEWHGKTISIDADYVRSHLDDLVSDEDFSRFIL</sequence>
<proteinExistence type="inferred from homology"/>
<comment type="function">
    <text evidence="1">ATPase subunit of a proteasome-like degradation complex; this subunit has chaperone activity. The binding of ATP and its subsequent hydrolysis by HslU are essential for unfolding of protein substrates subsequently hydrolyzed by HslV. HslU recognizes the N-terminal part of its protein substrates and unfolds these before they are guided to HslV for hydrolysis.</text>
</comment>
<comment type="subunit">
    <text evidence="1">A double ring-shaped homohexamer of HslV is capped on each side by a ring-shaped HslU homohexamer. The assembly of the HslU/HslV complex is dependent on binding of ATP.</text>
</comment>
<comment type="subcellular location">
    <subcellularLocation>
        <location evidence="1">Cytoplasm</location>
    </subcellularLocation>
</comment>
<comment type="similarity">
    <text evidence="1">Belongs to the ClpX chaperone family. HslU subfamily.</text>
</comment>
<protein>
    <recommendedName>
        <fullName evidence="1">ATP-dependent protease ATPase subunit HslU</fullName>
    </recommendedName>
    <alternativeName>
        <fullName evidence="1">Unfoldase HslU</fullName>
    </alternativeName>
</protein>
<feature type="chain" id="PRO_1000012703" description="ATP-dependent protease ATPase subunit HslU">
    <location>
        <begin position="1"/>
        <end position="446"/>
    </location>
</feature>
<feature type="binding site" evidence="1">
    <location>
        <position position="18"/>
    </location>
    <ligand>
        <name>ATP</name>
        <dbReference type="ChEBI" id="CHEBI:30616"/>
    </ligand>
</feature>
<feature type="binding site" evidence="1">
    <location>
        <begin position="60"/>
        <end position="65"/>
    </location>
    <ligand>
        <name>ATP</name>
        <dbReference type="ChEBI" id="CHEBI:30616"/>
    </ligand>
</feature>
<feature type="binding site" evidence="1">
    <location>
        <position position="259"/>
    </location>
    <ligand>
        <name>ATP</name>
        <dbReference type="ChEBI" id="CHEBI:30616"/>
    </ligand>
</feature>
<feature type="binding site" evidence="1">
    <location>
        <position position="324"/>
    </location>
    <ligand>
        <name>ATP</name>
        <dbReference type="ChEBI" id="CHEBI:30616"/>
    </ligand>
</feature>
<feature type="binding site" evidence="1">
    <location>
        <position position="396"/>
    </location>
    <ligand>
        <name>ATP</name>
        <dbReference type="ChEBI" id="CHEBI:30616"/>
    </ligand>
</feature>